<name>PROB_NEIMB</name>
<organism>
    <name type="scientific">Neisseria meningitidis serogroup B (strain ATCC BAA-335 / MC58)</name>
    <dbReference type="NCBI Taxonomy" id="122586"/>
    <lineage>
        <taxon>Bacteria</taxon>
        <taxon>Pseudomonadati</taxon>
        <taxon>Pseudomonadota</taxon>
        <taxon>Betaproteobacteria</taxon>
        <taxon>Neisseriales</taxon>
        <taxon>Neisseriaceae</taxon>
        <taxon>Neisseria</taxon>
    </lineage>
</organism>
<accession>Q9JZG2</accession>
<gene>
    <name evidence="1" type="primary">proB</name>
    <name type="ordered locus">NMB1069</name>
</gene>
<evidence type="ECO:0000255" key="1">
    <source>
        <dbReference type="HAMAP-Rule" id="MF_00456"/>
    </source>
</evidence>
<protein>
    <recommendedName>
        <fullName evidence="1">Glutamate 5-kinase</fullName>
        <ecNumber evidence="1">2.7.2.11</ecNumber>
    </recommendedName>
    <alternativeName>
        <fullName evidence="1">Gamma-glutamyl kinase</fullName>
        <shortName evidence="1">GK</shortName>
    </alternativeName>
</protein>
<dbReference type="EC" id="2.7.2.11" evidence="1"/>
<dbReference type="EMBL" id="AE002098">
    <property type="protein sequence ID" value="AAF41464.1"/>
    <property type="molecule type" value="Genomic_DNA"/>
</dbReference>
<dbReference type="PIR" id="F81125">
    <property type="entry name" value="F81125"/>
</dbReference>
<dbReference type="RefSeq" id="NP_274102.1">
    <property type="nucleotide sequence ID" value="NC_003112.2"/>
</dbReference>
<dbReference type="RefSeq" id="WP_002213646.1">
    <property type="nucleotide sequence ID" value="NC_003112.2"/>
</dbReference>
<dbReference type="SMR" id="Q9JZG2"/>
<dbReference type="FunCoup" id="Q9JZG2">
    <property type="interactions" value="372"/>
</dbReference>
<dbReference type="STRING" id="122586.NMB1069"/>
<dbReference type="PaxDb" id="122586-NMB1069"/>
<dbReference type="DNASU" id="903487"/>
<dbReference type="KEGG" id="nme:NMB1069"/>
<dbReference type="PATRIC" id="fig|122586.8.peg.1360"/>
<dbReference type="HOGENOM" id="CLU_025400_2_0_4"/>
<dbReference type="InParanoid" id="Q9JZG2"/>
<dbReference type="OrthoDB" id="9804434at2"/>
<dbReference type="UniPathway" id="UPA00098">
    <property type="reaction ID" value="UER00359"/>
</dbReference>
<dbReference type="Proteomes" id="UP000000425">
    <property type="component" value="Chromosome"/>
</dbReference>
<dbReference type="GO" id="GO:0005829">
    <property type="term" value="C:cytosol"/>
    <property type="evidence" value="ECO:0000318"/>
    <property type="project" value="GO_Central"/>
</dbReference>
<dbReference type="GO" id="GO:0005524">
    <property type="term" value="F:ATP binding"/>
    <property type="evidence" value="ECO:0007669"/>
    <property type="project" value="UniProtKB-KW"/>
</dbReference>
<dbReference type="GO" id="GO:0004349">
    <property type="term" value="F:glutamate 5-kinase activity"/>
    <property type="evidence" value="ECO:0000318"/>
    <property type="project" value="GO_Central"/>
</dbReference>
<dbReference type="GO" id="GO:0003723">
    <property type="term" value="F:RNA binding"/>
    <property type="evidence" value="ECO:0007669"/>
    <property type="project" value="InterPro"/>
</dbReference>
<dbReference type="GO" id="GO:0055129">
    <property type="term" value="P:L-proline biosynthetic process"/>
    <property type="evidence" value="ECO:0007669"/>
    <property type="project" value="UniProtKB-UniRule"/>
</dbReference>
<dbReference type="GO" id="GO:0006561">
    <property type="term" value="P:proline biosynthetic process"/>
    <property type="evidence" value="ECO:0000318"/>
    <property type="project" value="GO_Central"/>
</dbReference>
<dbReference type="CDD" id="cd04242">
    <property type="entry name" value="AAK_G5K_ProB"/>
    <property type="match status" value="1"/>
</dbReference>
<dbReference type="CDD" id="cd21157">
    <property type="entry name" value="PUA_G5K"/>
    <property type="match status" value="1"/>
</dbReference>
<dbReference type="FunFam" id="2.30.130.10:FF:000011">
    <property type="entry name" value="Glutamate 5-kinase"/>
    <property type="match status" value="1"/>
</dbReference>
<dbReference type="FunFam" id="3.40.1160.10:FF:000018">
    <property type="entry name" value="Glutamate 5-kinase"/>
    <property type="match status" value="1"/>
</dbReference>
<dbReference type="Gene3D" id="3.40.1160.10">
    <property type="entry name" value="Acetylglutamate kinase-like"/>
    <property type="match status" value="1"/>
</dbReference>
<dbReference type="Gene3D" id="2.30.130.10">
    <property type="entry name" value="PUA domain"/>
    <property type="match status" value="1"/>
</dbReference>
<dbReference type="HAMAP" id="MF_00456">
    <property type="entry name" value="ProB"/>
    <property type="match status" value="1"/>
</dbReference>
<dbReference type="InterPro" id="IPR036393">
    <property type="entry name" value="AceGlu_kinase-like_sf"/>
</dbReference>
<dbReference type="InterPro" id="IPR001048">
    <property type="entry name" value="Asp/Glu/Uridylate_kinase"/>
</dbReference>
<dbReference type="InterPro" id="IPR041739">
    <property type="entry name" value="G5K_ProB"/>
</dbReference>
<dbReference type="InterPro" id="IPR001057">
    <property type="entry name" value="Glu/AcGlu_kinase"/>
</dbReference>
<dbReference type="InterPro" id="IPR011529">
    <property type="entry name" value="Glu_5kinase"/>
</dbReference>
<dbReference type="InterPro" id="IPR005715">
    <property type="entry name" value="Glu_5kinase/COase_Synthase"/>
</dbReference>
<dbReference type="InterPro" id="IPR019797">
    <property type="entry name" value="Glutamate_5-kinase_CS"/>
</dbReference>
<dbReference type="InterPro" id="IPR002478">
    <property type="entry name" value="PUA"/>
</dbReference>
<dbReference type="InterPro" id="IPR015947">
    <property type="entry name" value="PUA-like_sf"/>
</dbReference>
<dbReference type="InterPro" id="IPR036974">
    <property type="entry name" value="PUA_sf"/>
</dbReference>
<dbReference type="NCBIfam" id="TIGR01027">
    <property type="entry name" value="proB"/>
    <property type="match status" value="1"/>
</dbReference>
<dbReference type="PANTHER" id="PTHR43654">
    <property type="entry name" value="GLUTAMATE 5-KINASE"/>
    <property type="match status" value="1"/>
</dbReference>
<dbReference type="PANTHER" id="PTHR43654:SF1">
    <property type="entry name" value="ISOPENTENYL PHOSPHATE KINASE"/>
    <property type="match status" value="1"/>
</dbReference>
<dbReference type="Pfam" id="PF00696">
    <property type="entry name" value="AA_kinase"/>
    <property type="match status" value="1"/>
</dbReference>
<dbReference type="Pfam" id="PF01472">
    <property type="entry name" value="PUA"/>
    <property type="match status" value="1"/>
</dbReference>
<dbReference type="PIRSF" id="PIRSF000729">
    <property type="entry name" value="GK"/>
    <property type="match status" value="1"/>
</dbReference>
<dbReference type="PRINTS" id="PR00474">
    <property type="entry name" value="GLU5KINASE"/>
</dbReference>
<dbReference type="SMART" id="SM00359">
    <property type="entry name" value="PUA"/>
    <property type="match status" value="1"/>
</dbReference>
<dbReference type="SUPFAM" id="SSF53633">
    <property type="entry name" value="Carbamate kinase-like"/>
    <property type="match status" value="1"/>
</dbReference>
<dbReference type="SUPFAM" id="SSF88697">
    <property type="entry name" value="PUA domain-like"/>
    <property type="match status" value="1"/>
</dbReference>
<dbReference type="PROSITE" id="PS00902">
    <property type="entry name" value="GLUTAMATE_5_KINASE"/>
    <property type="match status" value="1"/>
</dbReference>
<dbReference type="PROSITE" id="PS50890">
    <property type="entry name" value="PUA"/>
    <property type="match status" value="1"/>
</dbReference>
<sequence>MKYKRIVFKVGTSSITHSDGSLSRGKIQTITCQLAALHHAGHELVLVSSGAVAAGFGALGFKKRPVKIADKQASAAVGQGLLMEEYTANLSSDGIVSAQILLSRADFADKRRYQNAGGALSVLLQRRAVPIINENDTVSVEELKIGDNDTLSAQVAAMIQADLLVLLTDIDGLYTGNPNSNPDAVRLDKIEHINHEIIEMAGGSGSANGTGGMLTKIKAATIAAESGVPVYICSSLKPDALAEAAEHQADGSFFVPRAKGLRTQKQWLAFYSESRGSVYVDEGAEHALSEQGKSLLMSGIAGIEGHFSRMDTVTVYSKATKQPLGKGRVLFGSAAAEDLLKSRKAKGVFIHRDDWISITPEIRLLLTEF</sequence>
<comment type="function">
    <text evidence="1">Catalyzes the transfer of a phosphate group to glutamate to form L-glutamate 5-phosphate.</text>
</comment>
<comment type="catalytic activity">
    <reaction evidence="1">
        <text>L-glutamate + ATP = L-glutamyl 5-phosphate + ADP</text>
        <dbReference type="Rhea" id="RHEA:14877"/>
        <dbReference type="ChEBI" id="CHEBI:29985"/>
        <dbReference type="ChEBI" id="CHEBI:30616"/>
        <dbReference type="ChEBI" id="CHEBI:58274"/>
        <dbReference type="ChEBI" id="CHEBI:456216"/>
        <dbReference type="EC" id="2.7.2.11"/>
    </reaction>
</comment>
<comment type="pathway">
    <text evidence="1">Amino-acid biosynthesis; L-proline biosynthesis; L-glutamate 5-semialdehyde from L-glutamate: step 1/2.</text>
</comment>
<comment type="subcellular location">
    <subcellularLocation>
        <location evidence="1">Cytoplasm</location>
    </subcellularLocation>
</comment>
<comment type="similarity">
    <text evidence="1">Belongs to the glutamate 5-kinase family.</text>
</comment>
<proteinExistence type="inferred from homology"/>
<feature type="chain" id="PRO_0000109698" description="Glutamate 5-kinase">
    <location>
        <begin position="1"/>
        <end position="369"/>
    </location>
</feature>
<feature type="domain" description="PUA" evidence="1">
    <location>
        <begin position="275"/>
        <end position="355"/>
    </location>
</feature>
<feature type="binding site" evidence="1">
    <location>
        <position position="9"/>
    </location>
    <ligand>
        <name>ATP</name>
        <dbReference type="ChEBI" id="CHEBI:30616"/>
    </ligand>
</feature>
<feature type="binding site" evidence="1">
    <location>
        <position position="49"/>
    </location>
    <ligand>
        <name>substrate</name>
    </ligand>
</feature>
<feature type="binding site" evidence="1">
    <location>
        <position position="136"/>
    </location>
    <ligand>
        <name>substrate</name>
    </ligand>
</feature>
<feature type="binding site" evidence="1">
    <location>
        <position position="148"/>
    </location>
    <ligand>
        <name>substrate</name>
    </ligand>
</feature>
<feature type="binding site" evidence="1">
    <location>
        <begin position="168"/>
        <end position="169"/>
    </location>
    <ligand>
        <name>ATP</name>
        <dbReference type="ChEBI" id="CHEBI:30616"/>
    </ligand>
</feature>
<feature type="binding site" evidence="1">
    <location>
        <begin position="210"/>
        <end position="216"/>
    </location>
    <ligand>
        <name>ATP</name>
        <dbReference type="ChEBI" id="CHEBI:30616"/>
    </ligand>
</feature>
<reference key="1">
    <citation type="journal article" date="2000" name="Science">
        <title>Complete genome sequence of Neisseria meningitidis serogroup B strain MC58.</title>
        <authorList>
            <person name="Tettelin H."/>
            <person name="Saunders N.J."/>
            <person name="Heidelberg J.F."/>
            <person name="Jeffries A.C."/>
            <person name="Nelson K.E."/>
            <person name="Eisen J.A."/>
            <person name="Ketchum K.A."/>
            <person name="Hood D.W."/>
            <person name="Peden J.F."/>
            <person name="Dodson R.J."/>
            <person name="Nelson W.C."/>
            <person name="Gwinn M.L."/>
            <person name="DeBoy R.T."/>
            <person name="Peterson J.D."/>
            <person name="Hickey E.K."/>
            <person name="Haft D.H."/>
            <person name="Salzberg S.L."/>
            <person name="White O."/>
            <person name="Fleischmann R.D."/>
            <person name="Dougherty B.A."/>
            <person name="Mason T.M."/>
            <person name="Ciecko A."/>
            <person name="Parksey D.S."/>
            <person name="Blair E."/>
            <person name="Cittone H."/>
            <person name="Clark E.B."/>
            <person name="Cotton M.D."/>
            <person name="Utterback T.R."/>
            <person name="Khouri H.M."/>
            <person name="Qin H."/>
            <person name="Vamathevan J.J."/>
            <person name="Gill J."/>
            <person name="Scarlato V."/>
            <person name="Masignani V."/>
            <person name="Pizza M."/>
            <person name="Grandi G."/>
            <person name="Sun L."/>
            <person name="Smith H.O."/>
            <person name="Fraser C.M."/>
            <person name="Moxon E.R."/>
            <person name="Rappuoli R."/>
            <person name="Venter J.C."/>
        </authorList>
    </citation>
    <scope>NUCLEOTIDE SEQUENCE [LARGE SCALE GENOMIC DNA]</scope>
    <source>
        <strain>ATCC BAA-335 / MC58</strain>
    </source>
</reference>
<keyword id="KW-0028">Amino-acid biosynthesis</keyword>
<keyword id="KW-0067">ATP-binding</keyword>
<keyword id="KW-0963">Cytoplasm</keyword>
<keyword id="KW-0418">Kinase</keyword>
<keyword id="KW-0547">Nucleotide-binding</keyword>
<keyword id="KW-0641">Proline biosynthesis</keyword>
<keyword id="KW-1185">Reference proteome</keyword>
<keyword id="KW-0808">Transferase</keyword>